<proteinExistence type="predicted"/>
<dbReference type="EMBL" id="AE000516">
    <property type="protein sequence ID" value="AAK47916.1"/>
    <property type="molecule type" value="Genomic_DNA"/>
</dbReference>
<dbReference type="PIR" id="A70542">
    <property type="entry name" value="A70542"/>
</dbReference>
<dbReference type="RefSeq" id="WP_003900695.1">
    <property type="nucleotide sequence ID" value="NZ_KK341227.1"/>
</dbReference>
<dbReference type="KEGG" id="mtc:MT3573.2"/>
<dbReference type="PATRIC" id="fig|83331.31.peg.3834"/>
<dbReference type="HOGENOM" id="CLU_157627_0_0_11"/>
<dbReference type="Proteomes" id="UP000001020">
    <property type="component" value="Chromosome"/>
</dbReference>
<dbReference type="InterPro" id="IPR024384">
    <property type="entry name" value="DUF2742"/>
</dbReference>
<dbReference type="Pfam" id="PF10888">
    <property type="entry name" value="DUF2742"/>
    <property type="match status" value="1"/>
</dbReference>
<name>Y1583_MYCTO</name>
<gene>
    <name type="ordered locus">MT3573.2</name>
</gene>
<sequence length="132" mass="14039">MTAGAGGSPPTRRCPATEDRAPATVATPSSADPTASRAVSWWSVHEHVAPVLDAAGSWPMAGTPAWRQLDDADPRKWAAICDAARHWALRVETCQEAMAQASRDVSAAADWPGIAREIVRRRGVYIPRAGVA</sequence>
<accession>P9WLU0</accession>
<accession>L0T797</accession>
<accession>O06607</accession>
<reference key="1">
    <citation type="journal article" date="2002" name="J. Bacteriol.">
        <title>Whole-genome comparison of Mycobacterium tuberculosis clinical and laboratory strains.</title>
        <authorList>
            <person name="Fleischmann R.D."/>
            <person name="Alland D."/>
            <person name="Eisen J.A."/>
            <person name="Carpenter L."/>
            <person name="White O."/>
            <person name="Peterson J.D."/>
            <person name="DeBoy R.T."/>
            <person name="Dodson R.J."/>
            <person name="Gwinn M.L."/>
            <person name="Haft D.H."/>
            <person name="Hickey E.K."/>
            <person name="Kolonay J.F."/>
            <person name="Nelson W.C."/>
            <person name="Umayam L.A."/>
            <person name="Ermolaeva M.D."/>
            <person name="Salzberg S.L."/>
            <person name="Delcher A."/>
            <person name="Utterback T.R."/>
            <person name="Weidman J.F."/>
            <person name="Khouri H.M."/>
            <person name="Gill J."/>
            <person name="Mikula A."/>
            <person name="Bishai W."/>
            <person name="Jacobs W.R. Jr."/>
            <person name="Venter J.C."/>
            <person name="Fraser C.M."/>
        </authorList>
    </citation>
    <scope>NUCLEOTIDE SEQUENCE [LARGE SCALE GENOMIC DNA]</scope>
    <source>
        <strain>CDC 1551 / Oshkosh</strain>
    </source>
</reference>
<keyword id="KW-1185">Reference proteome</keyword>
<protein>
    <recommendedName>
        <fullName>Uncharacterized protein MT3573.2</fullName>
    </recommendedName>
</protein>
<comment type="similarity">
    <text evidence="2">To M.tuberculosis Rv2656c.</text>
</comment>
<evidence type="ECO:0000256" key="1">
    <source>
        <dbReference type="SAM" id="MobiDB-lite"/>
    </source>
</evidence>
<evidence type="ECO:0000305" key="2"/>
<feature type="chain" id="PRO_0000427420" description="Uncharacterized protein MT3573.2">
    <location>
        <begin position="1"/>
        <end position="132"/>
    </location>
</feature>
<feature type="region of interest" description="Disordered" evidence="1">
    <location>
        <begin position="1"/>
        <end position="34"/>
    </location>
</feature>
<organism>
    <name type="scientific">Mycobacterium tuberculosis (strain CDC 1551 / Oshkosh)</name>
    <dbReference type="NCBI Taxonomy" id="83331"/>
    <lineage>
        <taxon>Bacteria</taxon>
        <taxon>Bacillati</taxon>
        <taxon>Actinomycetota</taxon>
        <taxon>Actinomycetes</taxon>
        <taxon>Mycobacteriales</taxon>
        <taxon>Mycobacteriaceae</taxon>
        <taxon>Mycobacterium</taxon>
        <taxon>Mycobacterium tuberculosis complex</taxon>
    </lineage>
</organism>